<sequence length="1141" mass="124027">MINRDNKKAITKKGMISNRLNKFSIRKYTVGTASILVGTTLIFGLGNQEAKAAENTSTENAKQDDATTSDNKEVVSETENNSTTENDSTNPIKKETNTDSQPEAKEESTTSSTQQQQNNVTATTETKPQNIEKENVKPSTDKTATEDTSVILEEKKAPNYTNNDVTTKPSTSEIQTKPTTPQESTNIENSQPQPTPSKVDNQVTDATNPKEPVNVSKEELKNNPEKLKELVRNDNNTDRSTKPVATAPTSVAPKRLNAKMRFAVAQPAAVASNNVNDLITVTKQTIKVGDGKDNVAAAHDGKDIEYDTEFTIDNKVKKGDTMTINYDKNVIPSDLTDKNDPIDITDPSGEVIAKGTFDKATKQITYTFTDYVDKYEDIKARLTLYSYIDKQAVPNETSLNLTFATAGKETSQNVSVDYQDPMVHGDSNIQSIFTKLDENKQTIEQQIYVNPLKKTATNTKVDIAGSQVDDYGNIKLGNGSTIIDQNTEIKVYKVNPNQQLPQSNRIYDFSQYEDVTSQFDNKKSFSNNVATLDFGDINSAYIIKVVSKYTPTSDGELDIAQGTSMRTTDKYGYYNYAGYSNFIVTSNDTGGGDGTVKPEEKLYKIGDYVWEDVDKDGVQGTDSKEKPMANVLVTLTYPDGTTKSVRTDANGHYEFGGLKDGETYTVKFETPAGYLPTKVNGTTDGEKDSNGSSITVKINGKDDMSLDTGFYKEPKYNLGDYVWEDTNKDGIQDANEPGIKDVKVTLKDSTGKVIGTTTTDASGKYKFTDLDNGNYTVEFETPAGYTPTVKNTTAEDKDSNGLTTTGVIKDADNMTLDSGFYKTPKYSLGDYVWYDSNKDGKQDSTEKGIKDVKVTLLNEKGEVIGTTKTDENGKYRFDNLDSGKYKVIFEKPAGLTQTVTNTTEDDKDADGGEVDVTITDHDDFTLDNGYFEEDTSDSDSDSDSDSDSDSDSDSDSDSDSDSDSDSDSDSDSDSDSDSDSDSDSDSDSDSDSDSDSDSDSDSDSDSDSDSDSDSDSDSDSDSDSDSDSDSDSDSDSDSDSDSDSDSDSDSDSDSDSDSDSDSDSDSDSDSDSDSDSDSDSDAGKHTPVKPMSTTKDHHNKAKALPETGSENNGSNNATLFGGLFAALGSLLLFGRRKKQNK</sequence>
<name>SDRE_STAAN</name>
<comment type="function">
    <text evidence="1">Cell surface-associated calcium-binding protein which plays an important role in adhesion and pathogenesis. Contributes to the resistance to killing by innate immune components in blood and thus attenuates bacterial clearance by interacting with host complement factor H/CFAH and modulating its activity. Also inhibits bacterial opsonization and killing by interacting with host complement regulator C4BPA and thus inhibiting classical complement pathway activation.</text>
</comment>
<comment type="subunit">
    <text evidence="1">Interacts with host complement factor H/CFAH (via C-terminus). Interacts with host complement regulator C4BPA.</text>
</comment>
<comment type="subcellular location">
    <subcellularLocation>
        <location evidence="3">Secreted</location>
        <location evidence="3">Cell wall</location>
        <topology evidence="3">Peptidoglycan-anchor</topology>
    </subcellularLocation>
    <text evidence="1">Anchored to the cell wall by sortase A (By similarity).</text>
</comment>
<comment type="similarity">
    <text evidence="5">Belongs to the serine-aspartate repeat-containing protein (SDr) family.</text>
</comment>
<organism>
    <name type="scientific">Staphylococcus aureus (strain N315)</name>
    <dbReference type="NCBI Taxonomy" id="158879"/>
    <lineage>
        <taxon>Bacteria</taxon>
        <taxon>Bacillati</taxon>
        <taxon>Bacillota</taxon>
        <taxon>Bacilli</taxon>
        <taxon>Bacillales</taxon>
        <taxon>Staphylococcaceae</taxon>
        <taxon>Staphylococcus</taxon>
    </lineage>
</organism>
<accession>Q99W46</accession>
<keyword id="KW-0106">Calcium</keyword>
<keyword id="KW-0134">Cell wall</keyword>
<keyword id="KW-0572">Peptidoglycan-anchor</keyword>
<keyword id="KW-0677">Repeat</keyword>
<keyword id="KW-0964">Secreted</keyword>
<keyword id="KW-0732">Signal</keyword>
<keyword id="KW-0843">Virulence</keyword>
<feature type="signal peptide" evidence="2">
    <location>
        <begin position="1"/>
        <end position="52"/>
    </location>
</feature>
<feature type="chain" id="PRO_0000281167" description="Serine-aspartate repeat-containing protein E">
    <location>
        <begin position="53"/>
        <end position="1107"/>
    </location>
</feature>
<feature type="propeptide" id="PRO_0000281168" description="Removed by sortase" evidence="3">
    <location>
        <begin position="1108"/>
        <end position="1141"/>
    </location>
</feature>
<feature type="domain" description="CNA-B 1">
    <location>
        <begin position="602"/>
        <end position="714"/>
    </location>
</feature>
<feature type="domain" description="CNA-B 2">
    <location>
        <begin position="715"/>
        <end position="824"/>
    </location>
</feature>
<feature type="domain" description="CNA-B 3">
    <location>
        <begin position="825"/>
        <end position="935"/>
    </location>
</feature>
<feature type="region of interest" description="Ligand binding A region">
    <location>
        <begin position="53"/>
        <end position="601"/>
    </location>
</feature>
<feature type="region of interest" description="Disordered" evidence="4">
    <location>
        <begin position="54"/>
        <end position="248"/>
    </location>
</feature>
<feature type="region of interest" description="Disordered" evidence="4">
    <location>
        <begin position="899"/>
        <end position="1117"/>
    </location>
</feature>
<feature type="short sequence motif" description="YSIRK-G/S signaling motif" evidence="1">
    <location>
        <begin position="23"/>
        <end position="34"/>
    </location>
</feature>
<feature type="short sequence motif" description="LPXTG sorting signal" evidence="3">
    <location>
        <begin position="1104"/>
        <end position="1108"/>
    </location>
</feature>
<feature type="compositionally biased region" description="Basic and acidic residues" evidence="4">
    <location>
        <begin position="61"/>
        <end position="75"/>
    </location>
</feature>
<feature type="compositionally biased region" description="Low complexity" evidence="4">
    <location>
        <begin position="77"/>
        <end position="90"/>
    </location>
</feature>
<feature type="compositionally biased region" description="Basic and acidic residues" evidence="4">
    <location>
        <begin position="92"/>
        <end position="108"/>
    </location>
</feature>
<feature type="compositionally biased region" description="Low complexity" evidence="4">
    <location>
        <begin position="109"/>
        <end position="126"/>
    </location>
</feature>
<feature type="compositionally biased region" description="Basic and acidic residues" evidence="4">
    <location>
        <begin position="130"/>
        <end position="145"/>
    </location>
</feature>
<feature type="compositionally biased region" description="Polar residues" evidence="4">
    <location>
        <begin position="159"/>
        <end position="207"/>
    </location>
</feature>
<feature type="compositionally biased region" description="Basic and acidic residues" evidence="4">
    <location>
        <begin position="216"/>
        <end position="241"/>
    </location>
</feature>
<feature type="compositionally biased region" description="Acidic residues" evidence="4">
    <location>
        <begin position="903"/>
        <end position="913"/>
    </location>
</feature>
<feature type="compositionally biased region" description="Acidic residues" evidence="4">
    <location>
        <begin position="930"/>
        <end position="1080"/>
    </location>
</feature>
<feature type="modified residue" description="Pentaglycyl murein peptidoglycan amidated threonine" evidence="3">
    <location>
        <position position="1107"/>
    </location>
</feature>
<gene>
    <name type="primary">sdrE</name>
    <name type="ordered locus">SA0521</name>
</gene>
<protein>
    <recommendedName>
        <fullName>Serine-aspartate repeat-containing protein E</fullName>
    </recommendedName>
</protein>
<reference key="1">
    <citation type="journal article" date="2001" name="Lancet">
        <title>Whole genome sequencing of meticillin-resistant Staphylococcus aureus.</title>
        <authorList>
            <person name="Kuroda M."/>
            <person name="Ohta T."/>
            <person name="Uchiyama I."/>
            <person name="Baba T."/>
            <person name="Yuzawa H."/>
            <person name="Kobayashi I."/>
            <person name="Cui L."/>
            <person name="Oguchi A."/>
            <person name="Aoki K."/>
            <person name="Nagai Y."/>
            <person name="Lian J.-Q."/>
            <person name="Ito T."/>
            <person name="Kanamori M."/>
            <person name="Matsumaru H."/>
            <person name="Maruyama A."/>
            <person name="Murakami H."/>
            <person name="Hosoyama A."/>
            <person name="Mizutani-Ui Y."/>
            <person name="Takahashi N.K."/>
            <person name="Sawano T."/>
            <person name="Inoue R."/>
            <person name="Kaito C."/>
            <person name="Sekimizu K."/>
            <person name="Hirakawa H."/>
            <person name="Kuhara S."/>
            <person name="Goto S."/>
            <person name="Yabuzaki J."/>
            <person name="Kanehisa M."/>
            <person name="Yamashita A."/>
            <person name="Oshima K."/>
            <person name="Furuya K."/>
            <person name="Yoshino C."/>
            <person name="Shiba T."/>
            <person name="Hattori M."/>
            <person name="Ogasawara N."/>
            <person name="Hayashi H."/>
            <person name="Hiramatsu K."/>
        </authorList>
    </citation>
    <scope>NUCLEOTIDE SEQUENCE [LARGE SCALE GENOMIC DNA]</scope>
    <source>
        <strain>N315</strain>
    </source>
</reference>
<reference key="2">
    <citation type="submission" date="2007-10" db="UniProtKB">
        <title>Shotgun proteomic analysis of total and membrane protein extracts of S. aureus strain N315.</title>
        <authorList>
            <person name="Vaezzadeh A.R."/>
            <person name="Deshusses J."/>
            <person name="Lescuyer P."/>
            <person name="Hochstrasser D.F."/>
        </authorList>
    </citation>
    <scope>IDENTIFICATION BY MASS SPECTROMETRY [LARGE SCALE ANALYSIS]</scope>
    <source>
        <strain>N315</strain>
    </source>
</reference>
<evidence type="ECO:0000250" key="1">
    <source>
        <dbReference type="UniProtKB" id="O86489"/>
    </source>
</evidence>
<evidence type="ECO:0000255" key="2"/>
<evidence type="ECO:0000255" key="3">
    <source>
        <dbReference type="PROSITE-ProRule" id="PRU00477"/>
    </source>
</evidence>
<evidence type="ECO:0000256" key="4">
    <source>
        <dbReference type="SAM" id="MobiDB-lite"/>
    </source>
</evidence>
<evidence type="ECO:0000305" key="5"/>
<proteinExistence type="evidence at protein level"/>
<dbReference type="EMBL" id="BA000018">
    <property type="protein sequence ID" value="BAB41752.1"/>
    <property type="molecule type" value="Genomic_DNA"/>
</dbReference>
<dbReference type="PIR" id="E89824">
    <property type="entry name" value="E89824"/>
</dbReference>
<dbReference type="RefSeq" id="WP_000610259.1">
    <property type="nucleotide sequence ID" value="NC_002745.2"/>
</dbReference>
<dbReference type="SMR" id="Q99W46"/>
<dbReference type="EnsemblBacteria" id="BAB41752">
    <property type="protein sequence ID" value="BAB41752"/>
    <property type="gene ID" value="BAB41752"/>
</dbReference>
<dbReference type="KEGG" id="sau:SA0521"/>
<dbReference type="HOGENOM" id="CLU_004137_1_1_9"/>
<dbReference type="GO" id="GO:0005576">
    <property type="term" value="C:extracellular region"/>
    <property type="evidence" value="ECO:0007669"/>
    <property type="project" value="UniProtKB-KW"/>
</dbReference>
<dbReference type="GO" id="GO:0007155">
    <property type="term" value="P:cell adhesion"/>
    <property type="evidence" value="ECO:0007669"/>
    <property type="project" value="InterPro"/>
</dbReference>
<dbReference type="Gene3D" id="2.60.40.1280">
    <property type="match status" value="1"/>
</dbReference>
<dbReference type="Gene3D" id="2.60.40.1290">
    <property type="match status" value="1"/>
</dbReference>
<dbReference type="Gene3D" id="2.60.40.10">
    <property type="entry name" value="Immunoglobulins"/>
    <property type="match status" value="3"/>
</dbReference>
<dbReference type="InterPro" id="IPR011266">
    <property type="entry name" value="Adhesin_Fg-bd_dom_2"/>
</dbReference>
<dbReference type="InterPro" id="IPR008966">
    <property type="entry name" value="Adhesion_dom_sf"/>
</dbReference>
<dbReference type="InterPro" id="IPR011252">
    <property type="entry name" value="Fibrogen-bd_dom1"/>
</dbReference>
<dbReference type="InterPro" id="IPR013783">
    <property type="entry name" value="Ig-like_fold"/>
</dbReference>
<dbReference type="InterPro" id="IPR019931">
    <property type="entry name" value="LPXTG_anchor"/>
</dbReference>
<dbReference type="InterPro" id="IPR050972">
    <property type="entry name" value="SDr-like"/>
</dbReference>
<dbReference type="InterPro" id="IPR033764">
    <property type="entry name" value="Sdr_B"/>
</dbReference>
<dbReference type="InterPro" id="IPR041171">
    <property type="entry name" value="SDR_Ig"/>
</dbReference>
<dbReference type="InterPro" id="IPR005877">
    <property type="entry name" value="YSIRK_signal_dom"/>
</dbReference>
<dbReference type="NCBIfam" id="TIGR01167">
    <property type="entry name" value="LPXTG_anchor"/>
    <property type="match status" value="1"/>
</dbReference>
<dbReference type="NCBIfam" id="TIGR01168">
    <property type="entry name" value="YSIRK_signal"/>
    <property type="match status" value="1"/>
</dbReference>
<dbReference type="PANTHER" id="PTHR34403">
    <property type="entry name" value="TOL-PAL SYSTEM PROTEIN TOLA"/>
    <property type="match status" value="1"/>
</dbReference>
<dbReference type="PANTHER" id="PTHR34403:SF8">
    <property type="entry name" value="TOL-PAL SYSTEM PROTEIN TOLA"/>
    <property type="match status" value="1"/>
</dbReference>
<dbReference type="Pfam" id="PF17961">
    <property type="entry name" value="Big_8"/>
    <property type="match status" value="1"/>
</dbReference>
<dbReference type="Pfam" id="PF00746">
    <property type="entry name" value="Gram_pos_anchor"/>
    <property type="match status" value="1"/>
</dbReference>
<dbReference type="Pfam" id="PF17210">
    <property type="entry name" value="SdrD_B"/>
    <property type="match status" value="3"/>
</dbReference>
<dbReference type="Pfam" id="PF10425">
    <property type="entry name" value="SdrG_C_C"/>
    <property type="match status" value="1"/>
</dbReference>
<dbReference type="Pfam" id="PF04650">
    <property type="entry name" value="YSIRK_signal"/>
    <property type="match status" value="1"/>
</dbReference>
<dbReference type="SUPFAM" id="SSF49401">
    <property type="entry name" value="Bacterial adhesins"/>
    <property type="match status" value="2"/>
</dbReference>
<dbReference type="SUPFAM" id="SSF117074">
    <property type="entry name" value="Hypothetical protein PA1324"/>
    <property type="match status" value="3"/>
</dbReference>
<dbReference type="PROSITE" id="PS50847">
    <property type="entry name" value="GRAM_POS_ANCHORING"/>
    <property type="match status" value="1"/>
</dbReference>